<dbReference type="EC" id="1.3.1.98"/>
<dbReference type="EMBL" id="AE000520">
    <property type="protein sequence ID" value="AAC65086.1"/>
    <property type="molecule type" value="Genomic_DNA"/>
</dbReference>
<dbReference type="PIR" id="C71368">
    <property type="entry name" value="C71368"/>
</dbReference>
<dbReference type="RefSeq" id="WP_010881539.1">
    <property type="nucleotide sequence ID" value="NC_021490.2"/>
</dbReference>
<dbReference type="SMR" id="O83128"/>
<dbReference type="STRING" id="243276.TP_0090"/>
<dbReference type="EnsemblBacteria" id="AAC65086">
    <property type="protein sequence ID" value="AAC65086"/>
    <property type="gene ID" value="TP_0090"/>
</dbReference>
<dbReference type="KEGG" id="tpa:TP_0090"/>
<dbReference type="KEGG" id="tpw:TPANIC_0090"/>
<dbReference type="eggNOG" id="COG0812">
    <property type="taxonomic scope" value="Bacteria"/>
</dbReference>
<dbReference type="HOGENOM" id="CLU_035304_1_1_12"/>
<dbReference type="OrthoDB" id="9804753at2"/>
<dbReference type="UniPathway" id="UPA00219"/>
<dbReference type="Proteomes" id="UP000000811">
    <property type="component" value="Chromosome"/>
</dbReference>
<dbReference type="GO" id="GO:0005829">
    <property type="term" value="C:cytosol"/>
    <property type="evidence" value="ECO:0007669"/>
    <property type="project" value="TreeGrafter"/>
</dbReference>
<dbReference type="GO" id="GO:0071949">
    <property type="term" value="F:FAD binding"/>
    <property type="evidence" value="ECO:0007669"/>
    <property type="project" value="InterPro"/>
</dbReference>
<dbReference type="GO" id="GO:0008762">
    <property type="term" value="F:UDP-N-acetylmuramate dehydrogenase activity"/>
    <property type="evidence" value="ECO:0007669"/>
    <property type="project" value="UniProtKB-UniRule"/>
</dbReference>
<dbReference type="GO" id="GO:0051301">
    <property type="term" value="P:cell division"/>
    <property type="evidence" value="ECO:0007669"/>
    <property type="project" value="UniProtKB-KW"/>
</dbReference>
<dbReference type="GO" id="GO:0071555">
    <property type="term" value="P:cell wall organization"/>
    <property type="evidence" value="ECO:0007669"/>
    <property type="project" value="UniProtKB-KW"/>
</dbReference>
<dbReference type="GO" id="GO:0009252">
    <property type="term" value="P:peptidoglycan biosynthetic process"/>
    <property type="evidence" value="ECO:0007669"/>
    <property type="project" value="UniProtKB-UniRule"/>
</dbReference>
<dbReference type="GO" id="GO:0008360">
    <property type="term" value="P:regulation of cell shape"/>
    <property type="evidence" value="ECO:0007669"/>
    <property type="project" value="UniProtKB-KW"/>
</dbReference>
<dbReference type="Gene3D" id="3.30.465.10">
    <property type="match status" value="1"/>
</dbReference>
<dbReference type="Gene3D" id="3.90.78.10">
    <property type="entry name" value="UDP-N-acetylenolpyruvoylglucosamine reductase, C-terminal domain"/>
    <property type="match status" value="1"/>
</dbReference>
<dbReference type="Gene3D" id="3.30.43.10">
    <property type="entry name" value="Uridine Diphospho-n-acetylenolpyruvylglucosamine Reductase, domain 2"/>
    <property type="match status" value="1"/>
</dbReference>
<dbReference type="HAMAP" id="MF_00037">
    <property type="entry name" value="MurB"/>
    <property type="match status" value="1"/>
</dbReference>
<dbReference type="InterPro" id="IPR016166">
    <property type="entry name" value="FAD-bd_PCMH"/>
</dbReference>
<dbReference type="InterPro" id="IPR036318">
    <property type="entry name" value="FAD-bd_PCMH-like_sf"/>
</dbReference>
<dbReference type="InterPro" id="IPR016167">
    <property type="entry name" value="FAD-bd_PCMH_sub1"/>
</dbReference>
<dbReference type="InterPro" id="IPR016169">
    <property type="entry name" value="FAD-bd_PCMH_sub2"/>
</dbReference>
<dbReference type="InterPro" id="IPR003170">
    <property type="entry name" value="MurB"/>
</dbReference>
<dbReference type="InterPro" id="IPR011601">
    <property type="entry name" value="MurB_C"/>
</dbReference>
<dbReference type="InterPro" id="IPR036635">
    <property type="entry name" value="MurB_C_sf"/>
</dbReference>
<dbReference type="InterPro" id="IPR006094">
    <property type="entry name" value="Oxid_FAD_bind_N"/>
</dbReference>
<dbReference type="NCBIfam" id="NF011242">
    <property type="entry name" value="PRK14648.1"/>
    <property type="match status" value="1"/>
</dbReference>
<dbReference type="PANTHER" id="PTHR21071">
    <property type="entry name" value="UDP-N-ACETYLENOLPYRUVOYLGLUCOSAMINE REDUCTASE"/>
    <property type="match status" value="1"/>
</dbReference>
<dbReference type="PANTHER" id="PTHR21071:SF4">
    <property type="entry name" value="UDP-N-ACETYLENOLPYRUVOYLGLUCOSAMINE REDUCTASE"/>
    <property type="match status" value="1"/>
</dbReference>
<dbReference type="Pfam" id="PF01565">
    <property type="entry name" value="FAD_binding_4"/>
    <property type="match status" value="1"/>
</dbReference>
<dbReference type="Pfam" id="PF02873">
    <property type="entry name" value="MurB_C"/>
    <property type="match status" value="1"/>
</dbReference>
<dbReference type="SUPFAM" id="SSF56176">
    <property type="entry name" value="FAD-binding/transporter-associated domain-like"/>
    <property type="match status" value="1"/>
</dbReference>
<dbReference type="SUPFAM" id="SSF56194">
    <property type="entry name" value="Uridine diphospho-N-Acetylenolpyruvylglucosamine reductase, MurB, C-terminal domain"/>
    <property type="match status" value="1"/>
</dbReference>
<dbReference type="PROSITE" id="PS51387">
    <property type="entry name" value="FAD_PCMH"/>
    <property type="match status" value="1"/>
</dbReference>
<evidence type="ECO:0000250" key="1"/>
<evidence type="ECO:0000305" key="2"/>
<keyword id="KW-0131">Cell cycle</keyword>
<keyword id="KW-0132">Cell division</keyword>
<keyword id="KW-0133">Cell shape</keyword>
<keyword id="KW-0961">Cell wall biogenesis/degradation</keyword>
<keyword id="KW-0963">Cytoplasm</keyword>
<keyword id="KW-0274">FAD</keyword>
<keyword id="KW-0285">Flavoprotein</keyword>
<keyword id="KW-0521">NADP</keyword>
<keyword id="KW-0560">Oxidoreductase</keyword>
<keyword id="KW-0573">Peptidoglycan synthesis</keyword>
<keyword id="KW-1185">Reference proteome</keyword>
<reference key="1">
    <citation type="journal article" date="1998" name="Science">
        <title>Complete genome sequence of Treponema pallidum, the syphilis spirochete.</title>
        <authorList>
            <person name="Fraser C.M."/>
            <person name="Norris S.J."/>
            <person name="Weinstock G.M."/>
            <person name="White O."/>
            <person name="Sutton G.G."/>
            <person name="Dodson R.J."/>
            <person name="Gwinn M.L."/>
            <person name="Hickey E.K."/>
            <person name="Clayton R.A."/>
            <person name="Ketchum K.A."/>
            <person name="Sodergren E."/>
            <person name="Hardham J.M."/>
            <person name="McLeod M.P."/>
            <person name="Salzberg S.L."/>
            <person name="Peterson J.D."/>
            <person name="Khalak H.G."/>
            <person name="Richardson D.L."/>
            <person name="Howell J.K."/>
            <person name="Chidambaram M."/>
            <person name="Utterback T.R."/>
            <person name="McDonald L.A."/>
            <person name="Artiach P."/>
            <person name="Bowman C."/>
            <person name="Cotton M.D."/>
            <person name="Fujii C."/>
            <person name="Garland S.A."/>
            <person name="Hatch B."/>
            <person name="Horst K."/>
            <person name="Roberts K.M."/>
            <person name="Sandusky M."/>
            <person name="Weidman J.F."/>
            <person name="Smith H.O."/>
            <person name="Venter J.C."/>
        </authorList>
    </citation>
    <scope>NUCLEOTIDE SEQUENCE [LARGE SCALE GENOMIC DNA]</scope>
    <source>
        <strain>Nichols</strain>
    </source>
</reference>
<feature type="chain" id="PRO_0000179282" description="UDP-N-acetylenolpyruvoylglucosamine reductase">
    <location>
        <begin position="1"/>
        <end position="354"/>
    </location>
</feature>
<feature type="domain" description="FAD-binding PCMH-type">
    <location>
        <begin position="26"/>
        <end position="236"/>
    </location>
</feature>
<feature type="region of interest" description="Insert">
    <location>
        <begin position="158"/>
        <end position="184"/>
    </location>
</feature>
<feature type="active site" description="Proton donor" evidence="1">
    <location>
        <position position="265"/>
    </location>
</feature>
<feature type="active site" evidence="1">
    <location>
        <position position="337"/>
    </location>
</feature>
<organism>
    <name type="scientific">Treponema pallidum (strain Nichols)</name>
    <dbReference type="NCBI Taxonomy" id="243276"/>
    <lineage>
        <taxon>Bacteria</taxon>
        <taxon>Pseudomonadati</taxon>
        <taxon>Spirochaetota</taxon>
        <taxon>Spirochaetia</taxon>
        <taxon>Spirochaetales</taxon>
        <taxon>Treponemataceae</taxon>
        <taxon>Treponema</taxon>
    </lineage>
</organism>
<sequence>MSAHRIRARRITRRNVPLAERCSFRIGGAAQFWAEPRSCTQLRALIEEAQRARIPLSLIGGGSNVLIADEGVPGLMLSLRRFRSLHTQTQRDGSVLVHAGAGLPVAALLAFCAHHALRGLETFAGLPGSVGGAAYMNARCYGRAIADCFHSARTLVLHPVRSRAKELPEVRKNAQDKRGECLGLDGGPFTCSSFQTVFARAGDWGYKRSPFQSPHGVELHAGRRLILSLCVRLTPGNPAQIRKHMQEKIADRISKGQFRFPSAGSAFKNNPAFGKPSGILIEEAGLRGTSCGAAQVAPWHGNLIINTGNATAHQVRTLLRVVRQRVFETHGVWLEREIIFSGESVRMTSSSRDS</sequence>
<comment type="function">
    <text evidence="1">Cell wall formation.</text>
</comment>
<comment type="catalytic activity">
    <reaction>
        <text>UDP-N-acetyl-alpha-D-muramate + NADP(+) = UDP-N-acetyl-3-O-(1-carboxyvinyl)-alpha-D-glucosamine + NADPH + H(+)</text>
        <dbReference type="Rhea" id="RHEA:12248"/>
        <dbReference type="ChEBI" id="CHEBI:15378"/>
        <dbReference type="ChEBI" id="CHEBI:57783"/>
        <dbReference type="ChEBI" id="CHEBI:58349"/>
        <dbReference type="ChEBI" id="CHEBI:68483"/>
        <dbReference type="ChEBI" id="CHEBI:70757"/>
        <dbReference type="EC" id="1.3.1.98"/>
    </reaction>
</comment>
<comment type="cofactor">
    <cofactor evidence="1">
        <name>FAD</name>
        <dbReference type="ChEBI" id="CHEBI:57692"/>
    </cofactor>
</comment>
<comment type="pathway">
    <text>Cell wall biogenesis; peptidoglycan biosynthesis.</text>
</comment>
<comment type="subcellular location">
    <subcellularLocation>
        <location evidence="1">Cytoplasm</location>
    </subcellularLocation>
</comment>
<comment type="similarity">
    <text evidence="2">Belongs to the MurB family.</text>
</comment>
<accession>O83128</accession>
<gene>
    <name type="primary">murB</name>
    <name type="ordered locus">TP_0090</name>
</gene>
<protein>
    <recommendedName>
        <fullName>UDP-N-acetylenolpyruvoylglucosamine reductase</fullName>
        <ecNumber>1.3.1.98</ecNumber>
    </recommendedName>
    <alternativeName>
        <fullName>UDP-N-acetylmuramate dehydrogenase</fullName>
    </alternativeName>
</protein>
<proteinExistence type="inferred from homology"/>
<name>MURB_TREPA</name>